<reference key="1">
    <citation type="journal article" date="2005" name="Science">
        <title>Life at depth: Photobacterium profundum genome sequence and expression analysis.</title>
        <authorList>
            <person name="Vezzi A."/>
            <person name="Campanaro S."/>
            <person name="D'Angelo M."/>
            <person name="Simonato F."/>
            <person name="Vitulo N."/>
            <person name="Lauro F.M."/>
            <person name="Cestaro A."/>
            <person name="Malacrida G."/>
            <person name="Simionati B."/>
            <person name="Cannata N."/>
            <person name="Romualdi C."/>
            <person name="Bartlett D.H."/>
            <person name="Valle G."/>
        </authorList>
    </citation>
    <scope>NUCLEOTIDE SEQUENCE [LARGE SCALE GENOMIC DNA]</scope>
    <source>
        <strain>ATCC BAA-1253 / SS9</strain>
    </source>
</reference>
<feature type="chain" id="PRO_1000046763" description="UPF0304 protein PBPRA2768">
    <location>
        <begin position="1"/>
        <end position="166"/>
    </location>
</feature>
<dbReference type="EMBL" id="CR378672">
    <property type="protein sequence ID" value="CAG21140.1"/>
    <property type="molecule type" value="Genomic_DNA"/>
</dbReference>
<dbReference type="RefSeq" id="WP_011219414.1">
    <property type="nucleotide sequence ID" value="NC_006370.1"/>
</dbReference>
<dbReference type="SMR" id="Q6LNI6"/>
<dbReference type="STRING" id="298386.PBPRA2768"/>
<dbReference type="KEGG" id="ppr:PBPRA2768"/>
<dbReference type="eggNOG" id="COG3013">
    <property type="taxonomic scope" value="Bacteria"/>
</dbReference>
<dbReference type="HOGENOM" id="CLU_101021_1_0_6"/>
<dbReference type="Proteomes" id="UP000000593">
    <property type="component" value="Chromosome 1"/>
</dbReference>
<dbReference type="Gene3D" id="1.10.287.680">
    <property type="entry name" value="Helix hairpin bin"/>
    <property type="match status" value="1"/>
</dbReference>
<dbReference type="Gene3D" id="1.10.3190.10">
    <property type="entry name" value="yfbu gene product, domain 2"/>
    <property type="match status" value="1"/>
</dbReference>
<dbReference type="HAMAP" id="MF_00762">
    <property type="entry name" value="UPF0304"/>
    <property type="match status" value="1"/>
</dbReference>
<dbReference type="InterPro" id="IPR005587">
    <property type="entry name" value="UPF0304_YfbU"/>
</dbReference>
<dbReference type="InterPro" id="IPR023146">
    <property type="entry name" value="YfbU_alpha-helical_sf"/>
</dbReference>
<dbReference type="InterPro" id="IPR023145">
    <property type="entry name" value="YfbU_helix-hairpin_sf"/>
</dbReference>
<dbReference type="NCBIfam" id="NF003936">
    <property type="entry name" value="PRK05445.1"/>
    <property type="match status" value="1"/>
</dbReference>
<dbReference type="Pfam" id="PF03887">
    <property type="entry name" value="YfbU"/>
    <property type="match status" value="1"/>
</dbReference>
<dbReference type="PIRSF" id="PIRSF006272">
    <property type="entry name" value="UCP006272"/>
    <property type="match status" value="1"/>
</dbReference>
<dbReference type="SUPFAM" id="SSF116960">
    <property type="entry name" value="YfbU-like"/>
    <property type="match status" value="1"/>
</dbReference>
<organism>
    <name type="scientific">Photobacterium profundum (strain SS9)</name>
    <dbReference type="NCBI Taxonomy" id="298386"/>
    <lineage>
        <taxon>Bacteria</taxon>
        <taxon>Pseudomonadati</taxon>
        <taxon>Pseudomonadota</taxon>
        <taxon>Gammaproteobacteria</taxon>
        <taxon>Vibrionales</taxon>
        <taxon>Vibrionaceae</taxon>
        <taxon>Photobacterium</taxon>
    </lineage>
</organism>
<protein>
    <recommendedName>
        <fullName evidence="1">UPF0304 protein PBPRA2768</fullName>
    </recommendedName>
</protein>
<proteinExistence type="inferred from homology"/>
<gene>
    <name type="ordered locus">PBPRA2768</name>
</gene>
<evidence type="ECO:0000255" key="1">
    <source>
        <dbReference type="HAMAP-Rule" id="MF_00762"/>
    </source>
</evidence>
<keyword id="KW-1185">Reference proteome</keyword>
<sequence length="166" mass="19806">MDMTNAQRLILSNQYYLMSQLTPENEAKYRRLQTIVERGYGLQMRELDKDFGCLPEDACRNIIDYMEMHHALQESYKMLDDASQSQVEPRRLQFLGFDAATESQQVHYVRFLTEEEGLYPQFDKSEHQFNSQVQMQDKYQRMLQTWRNCPRQYHLSSSEITQILSA</sequence>
<comment type="similarity">
    <text evidence="1">Belongs to the UPF0304 family.</text>
</comment>
<accession>Q6LNI6</accession>
<name>Y2768_PHOPR</name>